<evidence type="ECO:0000250" key="1">
    <source>
        <dbReference type="UniProtKB" id="P00617"/>
    </source>
</evidence>
<evidence type="ECO:0000250" key="2">
    <source>
        <dbReference type="UniProtKB" id="P14418"/>
    </source>
</evidence>
<evidence type="ECO:0000255" key="3"/>
<evidence type="ECO:0000255" key="4">
    <source>
        <dbReference type="PROSITE-ProRule" id="PRU10035"/>
    </source>
</evidence>
<evidence type="ECO:0000255" key="5">
    <source>
        <dbReference type="PROSITE-ProRule" id="PRU10036"/>
    </source>
</evidence>
<evidence type="ECO:0000269" key="6">
    <source>
    </source>
</evidence>
<evidence type="ECO:0000305" key="7"/>
<evidence type="ECO:0000305" key="8">
    <source>
    </source>
</evidence>
<evidence type="ECO:0000312" key="9">
    <source>
        <dbReference type="EMBL" id="CAD24462.1"/>
    </source>
</evidence>
<sequence>MLIFLWCGAVCVSLLGAANIPPHPLNLINFMEMIRYTIPCEKTWGEYADYGCYCGAGGSGRPIDALDRCCYVHDNCYGDAEKKHKCNPKTQSYSYKLTKRTIICYGAAGTCARIVCDCDRTAALCFGNSEYIERHKNIDTKRHCR</sequence>
<organism>
    <name type="scientific">Bungarus multicinctus</name>
    <name type="common">Many-banded krait</name>
    <dbReference type="NCBI Taxonomy" id="8616"/>
    <lineage>
        <taxon>Eukaryota</taxon>
        <taxon>Metazoa</taxon>
        <taxon>Chordata</taxon>
        <taxon>Craniata</taxon>
        <taxon>Vertebrata</taxon>
        <taxon>Euteleostomi</taxon>
        <taxon>Lepidosauria</taxon>
        <taxon>Squamata</taxon>
        <taxon>Bifurcata</taxon>
        <taxon>Unidentata</taxon>
        <taxon>Episquamata</taxon>
        <taxon>Toxicofera</taxon>
        <taxon>Serpentes</taxon>
        <taxon>Colubroidea</taxon>
        <taxon>Elapidae</taxon>
        <taxon>Bungarinae</taxon>
        <taxon>Bungarus</taxon>
    </lineage>
</organism>
<protein>
    <recommendedName>
        <fullName>Basic phospholipase A2 beta-bungarotoxin A2 chain</fullName>
        <shortName>Beta-BuTX A2 chain</shortName>
        <shortName>svPLA2</shortName>
        <ecNumber>3.1.1.4</ecNumber>
    </recommendedName>
    <alternativeName>
        <fullName>Phosphatidylcholine 2-acylhydrolase</fullName>
    </alternativeName>
</protein>
<keyword id="KW-0106">Calcium</keyword>
<keyword id="KW-0903">Direct protein sequencing</keyword>
<keyword id="KW-1015">Disulfide bond</keyword>
<keyword id="KW-0378">Hydrolase</keyword>
<keyword id="KW-0442">Lipid degradation</keyword>
<keyword id="KW-0443">Lipid metabolism</keyword>
<keyword id="KW-0479">Metal-binding</keyword>
<keyword id="KW-0528">Neurotoxin</keyword>
<keyword id="KW-0638">Presynaptic neurotoxin</keyword>
<keyword id="KW-0964">Secreted</keyword>
<keyword id="KW-0732">Signal</keyword>
<keyword id="KW-0800">Toxin</keyword>
<dbReference type="EC" id="3.1.1.4"/>
<dbReference type="EMBL" id="X53407">
    <property type="protein sequence ID" value="CAA37483.1"/>
    <property type="molecule type" value="mRNA"/>
</dbReference>
<dbReference type="EMBL" id="AJ431707">
    <property type="protein sequence ID" value="CAD24462.1"/>
    <property type="molecule type" value="Genomic_DNA"/>
</dbReference>
<dbReference type="PIR" id="S10980">
    <property type="entry name" value="PSKFA2"/>
</dbReference>
<dbReference type="SMR" id="P00618"/>
<dbReference type="GO" id="GO:0005576">
    <property type="term" value="C:extracellular region"/>
    <property type="evidence" value="ECO:0007669"/>
    <property type="project" value="UniProtKB-SubCell"/>
</dbReference>
<dbReference type="GO" id="GO:0005509">
    <property type="term" value="F:calcium ion binding"/>
    <property type="evidence" value="ECO:0007669"/>
    <property type="project" value="InterPro"/>
</dbReference>
<dbReference type="GO" id="GO:0047498">
    <property type="term" value="F:calcium-dependent phospholipase A2 activity"/>
    <property type="evidence" value="ECO:0007669"/>
    <property type="project" value="TreeGrafter"/>
</dbReference>
<dbReference type="GO" id="GO:0005543">
    <property type="term" value="F:phospholipid binding"/>
    <property type="evidence" value="ECO:0007669"/>
    <property type="project" value="TreeGrafter"/>
</dbReference>
<dbReference type="GO" id="GO:0090729">
    <property type="term" value="F:toxin activity"/>
    <property type="evidence" value="ECO:0007669"/>
    <property type="project" value="UniProtKB-KW"/>
</dbReference>
<dbReference type="GO" id="GO:0050482">
    <property type="term" value="P:arachidonate secretion"/>
    <property type="evidence" value="ECO:0007669"/>
    <property type="project" value="InterPro"/>
</dbReference>
<dbReference type="GO" id="GO:0016042">
    <property type="term" value="P:lipid catabolic process"/>
    <property type="evidence" value="ECO:0007669"/>
    <property type="project" value="UniProtKB-KW"/>
</dbReference>
<dbReference type="GO" id="GO:0006644">
    <property type="term" value="P:phospholipid metabolic process"/>
    <property type="evidence" value="ECO:0007669"/>
    <property type="project" value="InterPro"/>
</dbReference>
<dbReference type="CDD" id="cd00125">
    <property type="entry name" value="PLA2c"/>
    <property type="match status" value="1"/>
</dbReference>
<dbReference type="FunFam" id="1.20.90.10:FF:000007">
    <property type="entry name" value="Acidic phospholipase A2"/>
    <property type="match status" value="1"/>
</dbReference>
<dbReference type="Gene3D" id="1.20.90.10">
    <property type="entry name" value="Phospholipase A2 domain"/>
    <property type="match status" value="1"/>
</dbReference>
<dbReference type="InterPro" id="IPR001211">
    <property type="entry name" value="PLipase_A2"/>
</dbReference>
<dbReference type="InterPro" id="IPR033112">
    <property type="entry name" value="PLipase_A2_Asp_AS"/>
</dbReference>
<dbReference type="InterPro" id="IPR016090">
    <property type="entry name" value="PLipase_A2_dom"/>
</dbReference>
<dbReference type="InterPro" id="IPR036444">
    <property type="entry name" value="PLipase_A2_dom_sf"/>
</dbReference>
<dbReference type="InterPro" id="IPR033113">
    <property type="entry name" value="PLipase_A2_His_AS"/>
</dbReference>
<dbReference type="PANTHER" id="PTHR11716:SF100">
    <property type="entry name" value="PHOSPHOLIPASE A2"/>
    <property type="match status" value="1"/>
</dbReference>
<dbReference type="PANTHER" id="PTHR11716">
    <property type="entry name" value="PHOSPHOLIPASE A2 FAMILY MEMBER"/>
    <property type="match status" value="1"/>
</dbReference>
<dbReference type="Pfam" id="PF00068">
    <property type="entry name" value="Phospholip_A2_1"/>
    <property type="match status" value="1"/>
</dbReference>
<dbReference type="PRINTS" id="PR00389">
    <property type="entry name" value="PHPHLIPASEA2"/>
</dbReference>
<dbReference type="SMART" id="SM00085">
    <property type="entry name" value="PA2c"/>
    <property type="match status" value="1"/>
</dbReference>
<dbReference type="SUPFAM" id="SSF48619">
    <property type="entry name" value="Phospholipase A2, PLA2"/>
    <property type="match status" value="1"/>
</dbReference>
<dbReference type="PROSITE" id="PS00119">
    <property type="entry name" value="PA2_ASP"/>
    <property type="match status" value="1"/>
</dbReference>
<dbReference type="PROSITE" id="PS00118">
    <property type="entry name" value="PA2_HIS"/>
    <property type="match status" value="1"/>
</dbReference>
<name>PA2B2_BUNMU</name>
<feature type="signal peptide" evidence="3">
    <location>
        <begin position="1"/>
        <end position="17"/>
    </location>
</feature>
<feature type="propeptide" id="PRO_0000022837" evidence="8">
    <location>
        <begin position="18"/>
        <end position="25"/>
    </location>
</feature>
<feature type="chain" id="PRO_0000022838" description="Basic phospholipase A2 beta-bungarotoxin A2 chain" evidence="6">
    <location>
        <begin position="26"/>
        <end position="145"/>
    </location>
</feature>
<feature type="active site" evidence="2">
    <location>
        <position position="73"/>
    </location>
</feature>
<feature type="active site" evidence="2">
    <location>
        <position position="119"/>
    </location>
</feature>
<feature type="binding site" evidence="1">
    <location>
        <position position="53"/>
    </location>
    <ligand>
        <name>Ca(2+)</name>
        <dbReference type="ChEBI" id="CHEBI:29108"/>
    </ligand>
</feature>
<feature type="binding site" evidence="1">
    <location>
        <position position="55"/>
    </location>
    <ligand>
        <name>Ca(2+)</name>
        <dbReference type="ChEBI" id="CHEBI:29108"/>
    </ligand>
</feature>
<feature type="binding site" evidence="1">
    <location>
        <position position="57"/>
    </location>
    <ligand>
        <name>Ca(2+)</name>
        <dbReference type="ChEBI" id="CHEBI:29108"/>
    </ligand>
</feature>
<feature type="binding site" evidence="1">
    <location>
        <position position="74"/>
    </location>
    <ligand>
        <name>Ca(2+)</name>
        <dbReference type="ChEBI" id="CHEBI:29108"/>
    </ligand>
</feature>
<feature type="disulfide bond" description="Interchain (with a B chain)" evidence="1">
    <location>
        <position position="40"/>
    </location>
</feature>
<feature type="disulfide bond" evidence="1">
    <location>
        <begin position="52"/>
        <end position="144"/>
    </location>
</feature>
<feature type="disulfide bond" evidence="1">
    <location>
        <begin position="54"/>
        <end position="70"/>
    </location>
</feature>
<feature type="disulfide bond" evidence="1">
    <location>
        <begin position="69"/>
        <end position="125"/>
    </location>
</feature>
<feature type="disulfide bond" evidence="1">
    <location>
        <begin position="76"/>
        <end position="118"/>
    </location>
</feature>
<feature type="disulfide bond" evidence="1">
    <location>
        <begin position="86"/>
        <end position="111"/>
    </location>
</feature>
<feature type="disulfide bond" evidence="1">
    <location>
        <begin position="104"/>
        <end position="116"/>
    </location>
</feature>
<feature type="sequence conflict" description="In Ref. 3; AA sequence." evidence="7" ref="3">
    <original>QS</original>
    <variation>SQ</variation>
    <location>
        <begin position="91"/>
        <end position="92"/>
    </location>
</feature>
<feature type="sequence conflict" description="In Ref. 3; AA sequence." evidence="7" ref="3">
    <original>N</original>
    <variation>Q</variation>
    <location>
        <position position="128"/>
    </location>
</feature>
<feature type="sequence conflict" description="In Ref. 3; AA sequence." evidence="7" ref="3">
    <original>E</original>
    <variation>D</variation>
    <location>
        <position position="130"/>
    </location>
</feature>
<proteinExistence type="evidence at protein level"/>
<reference key="1">
    <citation type="journal article" date="1990" name="Nucleic Acids Res.">
        <title>Nucleotide sequence encoding beta-bungarotoxin A2-chain from the venom glands of Bungarus multicinctus.</title>
        <authorList>
            <person name="Danse J.-M."/>
            <person name="Toussaint J.L."/>
            <person name="Kempf J."/>
        </authorList>
    </citation>
    <scope>NUCLEOTIDE SEQUENCE [MRNA]</scope>
    <source>
        <tissue>Venom gland</tissue>
    </source>
</reference>
<reference evidence="9" key="2">
    <citation type="journal article" date="2002" name="Toxicon">
        <title>The organization of the genes encoding the A chains of beta-bungarotoxins: evidence for the skipping of exon.</title>
        <authorList>
            <person name="Chu Y.P."/>
            <person name="Chang L.S."/>
        </authorList>
    </citation>
    <scope>NUCLEOTIDE SEQUENCE [GENOMIC DNA]</scope>
    <source>
        <tissue>Liver</tissue>
    </source>
</reference>
<reference key="3">
    <citation type="journal article" date="1982" name="J. Biochem.">
        <title>Amino acid sequences of three beta-bungarotoxins (beta 3-, beta 4-, and beta 5-bungarotoxins) from Bungarus multicinctus venom. Amino acid substitutions in the A chains.</title>
        <authorList>
            <person name="Kondo K."/>
            <person name="Toda H."/>
            <person name="Narita K."/>
            <person name="Lee C.-Y."/>
        </authorList>
    </citation>
    <scope>PROTEIN SEQUENCE OF 26-145</scope>
    <scope>SUBCELLULAR LOCATION</scope>
    <scope>SUBUNIT</scope>
    <scope>TOXIC DOSE</scope>
    <source>
        <tissue>Venom</tissue>
    </source>
</reference>
<reference key="4">
    <citation type="journal article" date="2001" name="Toxicon">
        <title>What does beta-bungarotoxin do at the neuromuscular junction?</title>
        <authorList>
            <person name="Rowan E.G."/>
        </authorList>
    </citation>
    <scope>REVIEW</scope>
</reference>
<accession>P00618</accession>
<accession>Q546H3</accession>
<comment type="function">
    <text>Snake venom phospholipase A2 (PLA2) that inhibits neuromuscular transmission by blocking acetylcholine release from the nerve termini. PLA2 catalyzes the calcium-dependent hydrolysis of the 2-acyl groups in 3-sn-phosphoglycerides.</text>
</comment>
<comment type="catalytic activity">
    <reaction evidence="4 5">
        <text>a 1,2-diacyl-sn-glycero-3-phosphocholine + H2O = a 1-acyl-sn-glycero-3-phosphocholine + a fatty acid + H(+)</text>
        <dbReference type="Rhea" id="RHEA:15801"/>
        <dbReference type="ChEBI" id="CHEBI:15377"/>
        <dbReference type="ChEBI" id="CHEBI:15378"/>
        <dbReference type="ChEBI" id="CHEBI:28868"/>
        <dbReference type="ChEBI" id="CHEBI:57643"/>
        <dbReference type="ChEBI" id="CHEBI:58168"/>
        <dbReference type="EC" id="3.1.1.4"/>
    </reaction>
</comment>
<comment type="cofactor">
    <cofactor evidence="1">
        <name>Ca(2+)</name>
        <dbReference type="ChEBI" id="CHEBI:29108"/>
    </cofactor>
    <text evidence="1">Binds 1 Ca(2+) ion.</text>
</comment>
<comment type="subunit">
    <text evidence="6">Heterodimer; disulfide-linked. The A chains have phospholipase A2 activity and the B chains show homology with the basic protease inhibitors. The A2 chain is found in beta-3 and beta-4 bungarotoxins.</text>
</comment>
<comment type="subcellular location">
    <subcellularLocation>
        <location evidence="6">Secreted</location>
    </subcellularLocation>
</comment>
<comment type="tissue specificity">
    <text evidence="8">Expressed by the venom gland.</text>
</comment>
<comment type="toxic dose">
    <text evidence="6">LD(50) is 0.066 mg/kg by intraperitoneal injection into mice (beta-3 bungarotoxin).</text>
</comment>
<comment type="toxic dose">
    <text evidence="6">LD(50) is 0.072 mg/kg by intraperitoneal injection into mice (beta-4 bungarotoxin).</text>
</comment>
<comment type="similarity">
    <text evidence="7">Belongs to the phospholipase A2 family. Group I subfamily. D49 sub-subfamily.</text>
</comment>